<protein>
    <recommendedName>
        <fullName evidence="1">Enolase-phosphatase E1</fullName>
        <ecNumber evidence="1">3.1.3.77</ecNumber>
    </recommendedName>
    <alternativeName>
        <fullName evidence="1">2,3-diketo-5-methylthio-1-phosphopentane phosphatase</fullName>
    </alternativeName>
</protein>
<organism>
    <name type="scientific">Xanthomonas axonopodis pv. citri (strain 306)</name>
    <dbReference type="NCBI Taxonomy" id="190486"/>
    <lineage>
        <taxon>Bacteria</taxon>
        <taxon>Pseudomonadati</taxon>
        <taxon>Pseudomonadota</taxon>
        <taxon>Gammaproteobacteria</taxon>
        <taxon>Lysobacterales</taxon>
        <taxon>Lysobacteraceae</taxon>
        <taxon>Xanthomonas</taxon>
    </lineage>
</organism>
<sequence>MTRPQAILTDIEGTTSSISFVKDVLFPYARRAMPAYVRDHGNHPQVRHWLNQVADEIGEDVPDEVLITTLQTWIDEDRKHTALKALQGLIWGDGYKTADFTAHIYADAAIQLKAWHAAGIPLYVYSSGSVPAQKLFFAHSDAGDLSGLITDWFDTEVGPKRESASYRRIAERIGVPGPEILFLSDVIEELDAAKRAGMRTALLDRLDDYPTPRSADEVGSHQRVESFSQLVL</sequence>
<accession>Q8PLG2</accession>
<reference key="1">
    <citation type="journal article" date="2002" name="Nature">
        <title>Comparison of the genomes of two Xanthomonas pathogens with differing host specificities.</title>
        <authorList>
            <person name="da Silva A.C.R."/>
            <person name="Ferro J.A."/>
            <person name="Reinach F.C."/>
            <person name="Farah C.S."/>
            <person name="Furlan L.R."/>
            <person name="Quaggio R.B."/>
            <person name="Monteiro-Vitorello C.B."/>
            <person name="Van Sluys M.A."/>
            <person name="Almeida N.F. Jr."/>
            <person name="Alves L.M.C."/>
            <person name="do Amaral A.M."/>
            <person name="Bertolini M.C."/>
            <person name="Camargo L.E.A."/>
            <person name="Camarotte G."/>
            <person name="Cannavan F."/>
            <person name="Cardozo J."/>
            <person name="Chambergo F."/>
            <person name="Ciapina L.P."/>
            <person name="Cicarelli R.M.B."/>
            <person name="Coutinho L.L."/>
            <person name="Cursino-Santos J.R."/>
            <person name="El-Dorry H."/>
            <person name="Faria J.B."/>
            <person name="Ferreira A.J.S."/>
            <person name="Ferreira R.C.C."/>
            <person name="Ferro M.I.T."/>
            <person name="Formighieri E.F."/>
            <person name="Franco M.C."/>
            <person name="Greggio C.C."/>
            <person name="Gruber A."/>
            <person name="Katsuyama A.M."/>
            <person name="Kishi L.T."/>
            <person name="Leite R.P."/>
            <person name="Lemos E.G.M."/>
            <person name="Lemos M.V.F."/>
            <person name="Locali E.C."/>
            <person name="Machado M.A."/>
            <person name="Madeira A.M.B.N."/>
            <person name="Martinez-Rossi N.M."/>
            <person name="Martins E.C."/>
            <person name="Meidanis J."/>
            <person name="Menck C.F.M."/>
            <person name="Miyaki C.Y."/>
            <person name="Moon D.H."/>
            <person name="Moreira L.M."/>
            <person name="Novo M.T.M."/>
            <person name="Okura V.K."/>
            <person name="Oliveira M.C."/>
            <person name="Oliveira V.R."/>
            <person name="Pereira H.A."/>
            <person name="Rossi A."/>
            <person name="Sena J.A.D."/>
            <person name="Silva C."/>
            <person name="de Souza R.F."/>
            <person name="Spinola L.A.F."/>
            <person name="Takita M.A."/>
            <person name="Tamura R.E."/>
            <person name="Teixeira E.C."/>
            <person name="Tezza R.I.D."/>
            <person name="Trindade dos Santos M."/>
            <person name="Truffi D."/>
            <person name="Tsai S.M."/>
            <person name="White F.F."/>
            <person name="Setubal J.C."/>
            <person name="Kitajima J.P."/>
        </authorList>
    </citation>
    <scope>NUCLEOTIDE SEQUENCE [LARGE SCALE GENOMIC DNA]</scope>
    <source>
        <strain>306</strain>
    </source>
</reference>
<feature type="chain" id="PRO_0000357427" description="Enolase-phosphatase E1">
    <location>
        <begin position="1"/>
        <end position="232"/>
    </location>
</feature>
<dbReference type="EC" id="3.1.3.77" evidence="1"/>
<dbReference type="EMBL" id="AE008923">
    <property type="protein sequence ID" value="AAM36700.1"/>
    <property type="molecule type" value="Genomic_DNA"/>
</dbReference>
<dbReference type="RefSeq" id="WP_003486234.1">
    <property type="nucleotide sequence ID" value="NC_003919.1"/>
</dbReference>
<dbReference type="SMR" id="Q8PLG2"/>
<dbReference type="GeneID" id="66910984"/>
<dbReference type="KEGG" id="xac:XAC1838"/>
<dbReference type="eggNOG" id="COG4229">
    <property type="taxonomic scope" value="Bacteria"/>
</dbReference>
<dbReference type="HOGENOM" id="CLU_023273_0_0_6"/>
<dbReference type="UniPathway" id="UPA00904">
    <property type="reaction ID" value="UER00876"/>
</dbReference>
<dbReference type="UniPathway" id="UPA00904">
    <property type="reaction ID" value="UER00877"/>
</dbReference>
<dbReference type="Proteomes" id="UP000000576">
    <property type="component" value="Chromosome"/>
</dbReference>
<dbReference type="GO" id="GO:0043715">
    <property type="term" value="F:2,3-diketo-5-methylthiopentyl-1-phosphate enolase activity"/>
    <property type="evidence" value="ECO:0007669"/>
    <property type="project" value="UniProtKB-UniRule"/>
</dbReference>
<dbReference type="GO" id="GO:0043716">
    <property type="term" value="F:2-hydroxy-3-keto-5-methylthiopentenyl-1-phosphate phosphatase activity"/>
    <property type="evidence" value="ECO:0007669"/>
    <property type="project" value="UniProtKB-UniRule"/>
</dbReference>
<dbReference type="GO" id="GO:0043874">
    <property type="term" value="F:acireductone synthase activity"/>
    <property type="evidence" value="ECO:0007669"/>
    <property type="project" value="UniProtKB-EC"/>
</dbReference>
<dbReference type="GO" id="GO:0000287">
    <property type="term" value="F:magnesium ion binding"/>
    <property type="evidence" value="ECO:0007669"/>
    <property type="project" value="UniProtKB-UniRule"/>
</dbReference>
<dbReference type="GO" id="GO:0019509">
    <property type="term" value="P:L-methionine salvage from methylthioadenosine"/>
    <property type="evidence" value="ECO:0007669"/>
    <property type="project" value="UniProtKB-UniRule"/>
</dbReference>
<dbReference type="CDD" id="cd01629">
    <property type="entry name" value="HAD_EP"/>
    <property type="match status" value="1"/>
</dbReference>
<dbReference type="FunFam" id="1.10.720.60:FF:000003">
    <property type="entry name" value="Enolase-phosphatase E1"/>
    <property type="match status" value="1"/>
</dbReference>
<dbReference type="FunFam" id="3.40.50.1000:FF:000079">
    <property type="entry name" value="Enolase-phosphatase E1"/>
    <property type="match status" value="1"/>
</dbReference>
<dbReference type="Gene3D" id="1.10.720.60">
    <property type="match status" value="1"/>
</dbReference>
<dbReference type="Gene3D" id="3.40.50.1000">
    <property type="entry name" value="HAD superfamily/HAD-like"/>
    <property type="match status" value="1"/>
</dbReference>
<dbReference type="HAMAP" id="MF_01681">
    <property type="entry name" value="Salvage_MtnC"/>
    <property type="match status" value="1"/>
</dbReference>
<dbReference type="InterPro" id="IPR023943">
    <property type="entry name" value="Enolase-ppase_E1"/>
</dbReference>
<dbReference type="InterPro" id="IPR036412">
    <property type="entry name" value="HAD-like_sf"/>
</dbReference>
<dbReference type="InterPro" id="IPR006439">
    <property type="entry name" value="HAD-SF_hydro_IA"/>
</dbReference>
<dbReference type="InterPro" id="IPR023214">
    <property type="entry name" value="HAD_sf"/>
</dbReference>
<dbReference type="NCBIfam" id="TIGR01691">
    <property type="entry name" value="enolase-ppase"/>
    <property type="match status" value="1"/>
</dbReference>
<dbReference type="NCBIfam" id="TIGR01549">
    <property type="entry name" value="HAD-SF-IA-v1"/>
    <property type="match status" value="1"/>
</dbReference>
<dbReference type="PANTHER" id="PTHR20371">
    <property type="entry name" value="ENOLASE-PHOSPHATASE E1"/>
    <property type="match status" value="1"/>
</dbReference>
<dbReference type="PANTHER" id="PTHR20371:SF1">
    <property type="entry name" value="ENOLASE-PHOSPHATASE E1"/>
    <property type="match status" value="1"/>
</dbReference>
<dbReference type="Pfam" id="PF00702">
    <property type="entry name" value="Hydrolase"/>
    <property type="match status" value="1"/>
</dbReference>
<dbReference type="SFLD" id="SFLDG01133">
    <property type="entry name" value="C1.5.4:_Enolase-phosphatase_Li"/>
    <property type="match status" value="1"/>
</dbReference>
<dbReference type="SFLD" id="SFLDF00044">
    <property type="entry name" value="enolase-phosphatase"/>
    <property type="match status" value="1"/>
</dbReference>
<dbReference type="SUPFAM" id="SSF56784">
    <property type="entry name" value="HAD-like"/>
    <property type="match status" value="1"/>
</dbReference>
<keyword id="KW-0028">Amino-acid biosynthesis</keyword>
<keyword id="KW-0378">Hydrolase</keyword>
<keyword id="KW-0460">Magnesium</keyword>
<keyword id="KW-0479">Metal-binding</keyword>
<keyword id="KW-0486">Methionine biosynthesis</keyword>
<name>MTNC_XANAC</name>
<gene>
    <name evidence="1" type="primary">mtnC</name>
    <name type="ordered locus">XAC1838</name>
</gene>
<evidence type="ECO:0000255" key="1">
    <source>
        <dbReference type="HAMAP-Rule" id="MF_01681"/>
    </source>
</evidence>
<comment type="function">
    <text evidence="1">Bifunctional enzyme that catalyzes the enolization of 2,3-diketo-5-methylthiopentyl-1-phosphate (DK-MTP-1-P) into the intermediate 2-hydroxy-3-keto-5-methylthiopentenyl-1-phosphate (HK-MTPenyl-1-P), which is then dephosphorylated to form the acireductone 1,2-dihydroxy-3-keto-5-methylthiopentene (DHK-MTPene).</text>
</comment>
<comment type="catalytic activity">
    <reaction evidence="1">
        <text>5-methylsulfanyl-2,3-dioxopentyl phosphate + H2O = 1,2-dihydroxy-5-(methylsulfanyl)pent-1-en-3-one + phosphate</text>
        <dbReference type="Rhea" id="RHEA:21700"/>
        <dbReference type="ChEBI" id="CHEBI:15377"/>
        <dbReference type="ChEBI" id="CHEBI:43474"/>
        <dbReference type="ChEBI" id="CHEBI:49252"/>
        <dbReference type="ChEBI" id="CHEBI:58828"/>
        <dbReference type="EC" id="3.1.3.77"/>
    </reaction>
</comment>
<comment type="cofactor">
    <cofactor evidence="1">
        <name>Mg(2+)</name>
        <dbReference type="ChEBI" id="CHEBI:18420"/>
    </cofactor>
    <text evidence="1">Binds 1 Mg(2+) ion per subunit.</text>
</comment>
<comment type="pathway">
    <text evidence="1">Amino-acid biosynthesis; L-methionine biosynthesis via salvage pathway; L-methionine from S-methyl-5-thio-alpha-D-ribose 1-phosphate: step 3/6.</text>
</comment>
<comment type="pathway">
    <text evidence="1">Amino-acid biosynthesis; L-methionine biosynthesis via salvage pathway; L-methionine from S-methyl-5-thio-alpha-D-ribose 1-phosphate: step 4/6.</text>
</comment>
<comment type="subunit">
    <text evidence="1">Monomer.</text>
</comment>
<comment type="similarity">
    <text evidence="1">Belongs to the HAD-like hydrolase superfamily. MasA/MtnC family.</text>
</comment>
<proteinExistence type="inferred from homology"/>